<protein>
    <recommendedName>
        <fullName evidence="1">Potassium-transporting ATPase potassium-binding subunit</fullName>
    </recommendedName>
    <alternativeName>
        <fullName evidence="1">ATP phosphohydrolase [potassium-transporting] A chain</fullName>
    </alternativeName>
    <alternativeName>
        <fullName evidence="1">Potassium-binding and translocating subunit A</fullName>
    </alternativeName>
    <alternativeName>
        <fullName evidence="1">Potassium-translocating ATPase A chain</fullName>
    </alternativeName>
</protein>
<proteinExistence type="inferred from homology"/>
<reference key="1">
    <citation type="journal article" date="2003" name="Nat. Genet.">
        <title>Comparative analysis of the genome sequences of Bordetella pertussis, Bordetella parapertussis and Bordetella bronchiseptica.</title>
        <authorList>
            <person name="Parkhill J."/>
            <person name="Sebaihia M."/>
            <person name="Preston A."/>
            <person name="Murphy L.D."/>
            <person name="Thomson N.R."/>
            <person name="Harris D.E."/>
            <person name="Holden M.T.G."/>
            <person name="Churcher C.M."/>
            <person name="Bentley S.D."/>
            <person name="Mungall K.L."/>
            <person name="Cerdeno-Tarraga A.-M."/>
            <person name="Temple L."/>
            <person name="James K.D."/>
            <person name="Harris B."/>
            <person name="Quail M.A."/>
            <person name="Achtman M."/>
            <person name="Atkin R."/>
            <person name="Baker S."/>
            <person name="Basham D."/>
            <person name="Bason N."/>
            <person name="Cherevach I."/>
            <person name="Chillingworth T."/>
            <person name="Collins M."/>
            <person name="Cronin A."/>
            <person name="Davis P."/>
            <person name="Doggett J."/>
            <person name="Feltwell T."/>
            <person name="Goble A."/>
            <person name="Hamlin N."/>
            <person name="Hauser H."/>
            <person name="Holroyd S."/>
            <person name="Jagels K."/>
            <person name="Leather S."/>
            <person name="Moule S."/>
            <person name="Norberczak H."/>
            <person name="O'Neil S."/>
            <person name="Ormond D."/>
            <person name="Price C."/>
            <person name="Rabbinowitsch E."/>
            <person name="Rutter S."/>
            <person name="Sanders M."/>
            <person name="Saunders D."/>
            <person name="Seeger K."/>
            <person name="Sharp S."/>
            <person name="Simmonds M."/>
            <person name="Skelton J."/>
            <person name="Squares R."/>
            <person name="Squares S."/>
            <person name="Stevens K."/>
            <person name="Unwin L."/>
            <person name="Whitehead S."/>
            <person name="Barrell B.G."/>
            <person name="Maskell D.J."/>
        </authorList>
    </citation>
    <scope>NUCLEOTIDE SEQUENCE [LARGE SCALE GENOMIC DNA]</scope>
    <source>
        <strain>Tohama I / ATCC BAA-589 / NCTC 13251</strain>
    </source>
</reference>
<sequence>MNADFLGLLLLYLAILLCAAPLLGRHIRQAINGERTWLTAWGQPLERGLYRLAGVDPAAEMDWRRYAVAMLVFNVLGVLAVYALQRLQGWLPLNPAGLPGVAPDSALNTAISFVTNTNWQGYAGESTMSYLTQMLALTVQNFVSAATGIAVLIALVRGLARHSAATLGNFWADLVRATLYVLLPLSFILALALVSQGVVQNLDPYVEAQTVQAQQYETARLDAQGQPMTGPAGQPLTDTVVTRVQTLPMGPVASQEAIKLLGTNGGGFFNANSAHPYENPNAWSNLLEMLAILLIPAALCWTFGEMVGSRRQGVAILAAMTVLFAGFAASAAYFEQQPTPALRQAEAALLADGGNLEGKEARFGVAATALFATVTTAASCGAVNGMHDSFSALGGVTPLLQMQLGEVIYGGVGSGLYGMLAFAILAVFIAGLMIGRTPEYLGKKIEALDMQMVALVILATPALVLAGTAVAVLADAGRAGVLNPGAHGFSEILYAMSSAANNNGSAFAGLSANTPFYNVLLGLAMWFGRYTIIVAILALAGSLAAKPRLPASVGGMPTTGPLFVALLVGAVLLVGALTYVPALALGPVAEHLQP</sequence>
<comment type="function">
    <text evidence="1">Part of the high-affinity ATP-driven potassium transport (or Kdp) system, which catalyzes the hydrolysis of ATP coupled with the electrogenic transport of potassium into the cytoplasm. This subunit binds the periplasmic potassium ions and delivers the ions to the membrane domain of KdpB through an intramembrane tunnel.</text>
</comment>
<comment type="subunit">
    <text evidence="1">The system is composed of three essential subunits: KdpA, KdpB and KdpC.</text>
</comment>
<comment type="subcellular location">
    <subcellularLocation>
        <location evidence="1">Cell inner membrane</location>
        <topology evidence="1">Multi-pass membrane protein</topology>
    </subcellularLocation>
</comment>
<comment type="similarity">
    <text evidence="1">Belongs to the KdpA family.</text>
</comment>
<organism>
    <name type="scientific">Bordetella pertussis (strain Tohama I / ATCC BAA-589 / NCTC 13251)</name>
    <dbReference type="NCBI Taxonomy" id="257313"/>
    <lineage>
        <taxon>Bacteria</taxon>
        <taxon>Pseudomonadati</taxon>
        <taxon>Pseudomonadota</taxon>
        <taxon>Betaproteobacteria</taxon>
        <taxon>Burkholderiales</taxon>
        <taxon>Alcaligenaceae</taxon>
        <taxon>Bordetella</taxon>
    </lineage>
</organism>
<accession>Q7VVZ9</accession>
<dbReference type="EMBL" id="BX640418">
    <property type="protein sequence ID" value="CAE42752.1"/>
    <property type="molecule type" value="Genomic_DNA"/>
</dbReference>
<dbReference type="RefSeq" id="NP_881107.1">
    <property type="nucleotide sequence ID" value="NC_002929.2"/>
</dbReference>
<dbReference type="RefSeq" id="WP_010930949.1">
    <property type="nucleotide sequence ID" value="NZ_CP039022.1"/>
</dbReference>
<dbReference type="SMR" id="Q7VVZ9"/>
<dbReference type="STRING" id="257313.BP2480"/>
<dbReference type="PaxDb" id="257313-BP2480"/>
<dbReference type="GeneID" id="69602381"/>
<dbReference type="KEGG" id="bpe:BP2480"/>
<dbReference type="PATRIC" id="fig|257313.5.peg.2675"/>
<dbReference type="eggNOG" id="COG2060">
    <property type="taxonomic scope" value="Bacteria"/>
</dbReference>
<dbReference type="HOGENOM" id="CLU_018614_3_0_4"/>
<dbReference type="Proteomes" id="UP000002676">
    <property type="component" value="Chromosome"/>
</dbReference>
<dbReference type="GO" id="GO:0005886">
    <property type="term" value="C:plasma membrane"/>
    <property type="evidence" value="ECO:0007669"/>
    <property type="project" value="UniProtKB-SubCell"/>
</dbReference>
<dbReference type="GO" id="GO:0008556">
    <property type="term" value="F:P-type potassium transmembrane transporter activity"/>
    <property type="evidence" value="ECO:0007669"/>
    <property type="project" value="InterPro"/>
</dbReference>
<dbReference type="GO" id="GO:0030955">
    <property type="term" value="F:potassium ion binding"/>
    <property type="evidence" value="ECO:0007669"/>
    <property type="project" value="UniProtKB-UniRule"/>
</dbReference>
<dbReference type="HAMAP" id="MF_00275">
    <property type="entry name" value="KdpA"/>
    <property type="match status" value="1"/>
</dbReference>
<dbReference type="InterPro" id="IPR004623">
    <property type="entry name" value="KdpA"/>
</dbReference>
<dbReference type="NCBIfam" id="TIGR00680">
    <property type="entry name" value="kdpA"/>
    <property type="match status" value="1"/>
</dbReference>
<dbReference type="PANTHER" id="PTHR30607">
    <property type="entry name" value="POTASSIUM-TRANSPORTING ATPASE A CHAIN"/>
    <property type="match status" value="1"/>
</dbReference>
<dbReference type="PANTHER" id="PTHR30607:SF2">
    <property type="entry name" value="POTASSIUM-TRANSPORTING ATPASE POTASSIUM-BINDING SUBUNIT"/>
    <property type="match status" value="1"/>
</dbReference>
<dbReference type="Pfam" id="PF03814">
    <property type="entry name" value="KdpA"/>
    <property type="match status" value="1"/>
</dbReference>
<dbReference type="PIRSF" id="PIRSF001294">
    <property type="entry name" value="K_ATPaseA"/>
    <property type="match status" value="1"/>
</dbReference>
<keyword id="KW-0997">Cell inner membrane</keyword>
<keyword id="KW-1003">Cell membrane</keyword>
<keyword id="KW-0406">Ion transport</keyword>
<keyword id="KW-0472">Membrane</keyword>
<keyword id="KW-0630">Potassium</keyword>
<keyword id="KW-0633">Potassium transport</keyword>
<keyword id="KW-1185">Reference proteome</keyword>
<keyword id="KW-0812">Transmembrane</keyword>
<keyword id="KW-1133">Transmembrane helix</keyword>
<keyword id="KW-0813">Transport</keyword>
<evidence type="ECO:0000255" key="1">
    <source>
        <dbReference type="HAMAP-Rule" id="MF_00275"/>
    </source>
</evidence>
<feature type="chain" id="PRO_0000166485" description="Potassium-transporting ATPase potassium-binding subunit">
    <location>
        <begin position="1"/>
        <end position="594"/>
    </location>
</feature>
<feature type="transmembrane region" description="Helical" evidence="1">
    <location>
        <begin position="3"/>
        <end position="23"/>
    </location>
</feature>
<feature type="transmembrane region" description="Helical" evidence="1">
    <location>
        <begin position="67"/>
        <end position="87"/>
    </location>
</feature>
<feature type="transmembrane region" description="Helical" evidence="1">
    <location>
        <begin position="136"/>
        <end position="156"/>
    </location>
</feature>
<feature type="transmembrane region" description="Helical" evidence="1">
    <location>
        <begin position="179"/>
        <end position="199"/>
    </location>
</feature>
<feature type="transmembrane region" description="Helical" evidence="1">
    <location>
        <begin position="287"/>
        <end position="307"/>
    </location>
</feature>
<feature type="transmembrane region" description="Helical" evidence="1">
    <location>
        <begin position="314"/>
        <end position="334"/>
    </location>
</feature>
<feature type="transmembrane region" description="Helical" evidence="1">
    <location>
        <begin position="415"/>
        <end position="435"/>
    </location>
</feature>
<feature type="transmembrane region" description="Helical" evidence="1">
    <location>
        <begin position="453"/>
        <end position="473"/>
    </location>
</feature>
<feature type="transmembrane region" description="Helical" evidence="1">
    <location>
        <begin position="519"/>
        <end position="539"/>
    </location>
</feature>
<feature type="transmembrane region" description="Helical" evidence="1">
    <location>
        <begin position="562"/>
        <end position="582"/>
    </location>
</feature>
<name>KDPA_BORPE</name>
<gene>
    <name evidence="1" type="primary">kdpA</name>
    <name type="ordered locus">BP2480</name>
</gene>